<gene>
    <name evidence="1" type="primary">mtnX</name>
    <name type="ordered locus">BCG9842_B1092</name>
</gene>
<accession>B7IWE9</accession>
<keyword id="KW-0028">Amino-acid biosynthesis</keyword>
<keyword id="KW-0378">Hydrolase</keyword>
<keyword id="KW-0486">Methionine biosynthesis</keyword>
<dbReference type="EC" id="3.1.3.87" evidence="1"/>
<dbReference type="EMBL" id="CP001186">
    <property type="protein sequence ID" value="ACK96823.1"/>
    <property type="molecule type" value="Genomic_DNA"/>
</dbReference>
<dbReference type="RefSeq" id="WP_000027488.1">
    <property type="nucleotide sequence ID" value="NC_011772.1"/>
</dbReference>
<dbReference type="SMR" id="B7IWE9"/>
<dbReference type="GeneID" id="72450720"/>
<dbReference type="KEGG" id="bcg:BCG9842_B1092"/>
<dbReference type="HOGENOM" id="CLU_058495_2_1_9"/>
<dbReference type="UniPathway" id="UPA00904">
    <property type="reaction ID" value="UER00877"/>
</dbReference>
<dbReference type="Proteomes" id="UP000006744">
    <property type="component" value="Chromosome"/>
</dbReference>
<dbReference type="GO" id="GO:0043716">
    <property type="term" value="F:2-hydroxy-3-keto-5-methylthiopentenyl-1-phosphate phosphatase activity"/>
    <property type="evidence" value="ECO:0007669"/>
    <property type="project" value="UniProtKB-UniRule"/>
</dbReference>
<dbReference type="GO" id="GO:0019509">
    <property type="term" value="P:L-methionine salvage from methylthioadenosine"/>
    <property type="evidence" value="ECO:0007669"/>
    <property type="project" value="UniProtKB-UniRule"/>
</dbReference>
<dbReference type="CDD" id="cd07524">
    <property type="entry name" value="HAD_Pase"/>
    <property type="match status" value="1"/>
</dbReference>
<dbReference type="Gene3D" id="3.90.1470.20">
    <property type="match status" value="1"/>
</dbReference>
<dbReference type="Gene3D" id="3.40.50.1000">
    <property type="entry name" value="HAD superfamily/HAD-like"/>
    <property type="match status" value="1"/>
</dbReference>
<dbReference type="HAMAP" id="MF_01680">
    <property type="entry name" value="Salvage_MtnX"/>
    <property type="match status" value="1"/>
</dbReference>
<dbReference type="InterPro" id="IPR050849">
    <property type="entry name" value="HAD-like_hydrolase_phosphatase"/>
</dbReference>
<dbReference type="InterPro" id="IPR036412">
    <property type="entry name" value="HAD-like_sf"/>
</dbReference>
<dbReference type="InterPro" id="IPR017718">
    <property type="entry name" value="HAD-SF_hydro_IB_MtnX"/>
</dbReference>
<dbReference type="InterPro" id="IPR006384">
    <property type="entry name" value="HAD_hydro_PyrdxlP_Pase-like"/>
</dbReference>
<dbReference type="InterPro" id="IPR023214">
    <property type="entry name" value="HAD_sf"/>
</dbReference>
<dbReference type="NCBIfam" id="TIGR01489">
    <property type="entry name" value="DKMTPPase-SF"/>
    <property type="match status" value="1"/>
</dbReference>
<dbReference type="NCBIfam" id="TIGR01488">
    <property type="entry name" value="HAD-SF-IB"/>
    <property type="match status" value="1"/>
</dbReference>
<dbReference type="NCBIfam" id="NF007103">
    <property type="entry name" value="PRK09552.1"/>
    <property type="match status" value="1"/>
</dbReference>
<dbReference type="NCBIfam" id="TIGR03333">
    <property type="entry name" value="salvage_mtnX"/>
    <property type="match status" value="1"/>
</dbReference>
<dbReference type="PANTHER" id="PTHR28181:SF2">
    <property type="entry name" value="PHOSPHORIC MONOESTER HYDROLASE"/>
    <property type="match status" value="1"/>
</dbReference>
<dbReference type="PANTHER" id="PTHR28181">
    <property type="entry name" value="UPF0655 PROTEIN YCR015C"/>
    <property type="match status" value="1"/>
</dbReference>
<dbReference type="Pfam" id="PF12710">
    <property type="entry name" value="HAD"/>
    <property type="match status" value="1"/>
</dbReference>
<dbReference type="SUPFAM" id="SSF56784">
    <property type="entry name" value="HAD-like"/>
    <property type="match status" value="1"/>
</dbReference>
<evidence type="ECO:0000255" key="1">
    <source>
        <dbReference type="HAMAP-Rule" id="MF_01680"/>
    </source>
</evidence>
<comment type="function">
    <text evidence="1">Dephosphorylates 2-hydroxy-3-keto-5-methylthiopentenyl-1-phosphate (HK-MTPenyl-1-P) yielding 1,2-dihydroxy-3-keto-5-methylthiopentene (DHK-MTPene).</text>
</comment>
<comment type="catalytic activity">
    <reaction evidence="1">
        <text>2-hydroxy-5-methylsulfanyl-3-oxopent-1-enyl phosphate + H2O = 1,2-dihydroxy-5-(methylsulfanyl)pent-1-en-3-one + phosphate</text>
        <dbReference type="Rhea" id="RHEA:14481"/>
        <dbReference type="ChEBI" id="CHEBI:15377"/>
        <dbReference type="ChEBI" id="CHEBI:43474"/>
        <dbReference type="ChEBI" id="CHEBI:49252"/>
        <dbReference type="ChEBI" id="CHEBI:59505"/>
        <dbReference type="EC" id="3.1.3.87"/>
    </reaction>
</comment>
<comment type="pathway">
    <text evidence="1">Amino-acid biosynthesis; L-methionine biosynthesis via salvage pathway; L-methionine from S-methyl-5-thio-alpha-D-ribose 1-phosphate: step 4/6.</text>
</comment>
<comment type="similarity">
    <text evidence="1">Belongs to the HAD-like hydrolase superfamily. MtnX family.</text>
</comment>
<protein>
    <recommendedName>
        <fullName evidence="1">2-hydroxy-3-keto-5-methylthiopentenyl-1-phosphate phosphatase</fullName>
        <shortName evidence="1">HK-MTPenyl-1-P phosphatase</shortName>
        <ecNumber evidence="1">3.1.3.87</ecNumber>
    </recommendedName>
</protein>
<proteinExistence type="inferred from homology"/>
<name>MTNX_BACC2</name>
<organism>
    <name type="scientific">Bacillus cereus (strain G9842)</name>
    <dbReference type="NCBI Taxonomy" id="405531"/>
    <lineage>
        <taxon>Bacteria</taxon>
        <taxon>Bacillati</taxon>
        <taxon>Bacillota</taxon>
        <taxon>Bacilli</taxon>
        <taxon>Bacillales</taxon>
        <taxon>Bacillaceae</taxon>
        <taxon>Bacillus</taxon>
        <taxon>Bacillus cereus group</taxon>
    </lineage>
</organism>
<reference key="1">
    <citation type="submission" date="2008-10" db="EMBL/GenBank/DDBJ databases">
        <title>Genome sequence of Bacillus cereus G9842.</title>
        <authorList>
            <person name="Dodson R.J."/>
            <person name="Durkin A.S."/>
            <person name="Rosovitz M.J."/>
            <person name="Rasko D.A."/>
            <person name="Hoffmaster A."/>
            <person name="Ravel J."/>
            <person name="Sutton G."/>
        </authorList>
    </citation>
    <scope>NUCLEOTIDE SEQUENCE [LARGE SCALE GENOMIC DNA]</scope>
    <source>
        <strain>G9842</strain>
    </source>
</reference>
<sequence length="219" mass="25299">MSIQVFCDFDGTITNNDNIMSIMEKFAPPEAEEVKNRILSQELSIQEGVSQLFRLIPTHLHDEIIQFLIETAELRNGFHEFIQFVNENNISFYVISGGMDFFVYPLLQGLIPKEQIYCNETDFSNEYITVNWPHPCDHHCQNHCGLCKSSLIRKLSDTNDFHIVIGDSITDLQAAKQADKVFARDFLITKCAENYIAYTPFETFHDIQNELKHLLEVKS</sequence>
<feature type="chain" id="PRO_1000187384" description="2-hydroxy-3-keto-5-methylthiopentenyl-1-phosphate phosphatase">
    <location>
        <begin position="1"/>
        <end position="219"/>
    </location>
</feature>